<reference key="1">
    <citation type="journal article" date="2003" name="DNA Res.">
        <title>Complete genome structure of Gloeobacter violaceus PCC 7421, a cyanobacterium that lacks thylakoids.</title>
        <authorList>
            <person name="Nakamura Y."/>
            <person name="Kaneko T."/>
            <person name="Sato S."/>
            <person name="Mimuro M."/>
            <person name="Miyashita H."/>
            <person name="Tsuchiya T."/>
            <person name="Sasamoto S."/>
            <person name="Watanabe A."/>
            <person name="Kawashima K."/>
            <person name="Kishida Y."/>
            <person name="Kiyokawa C."/>
            <person name="Kohara M."/>
            <person name="Matsumoto M."/>
            <person name="Matsuno A."/>
            <person name="Nakazaki N."/>
            <person name="Shimpo S."/>
            <person name="Takeuchi C."/>
            <person name="Yamada M."/>
            <person name="Tabata S."/>
        </authorList>
    </citation>
    <scope>NUCLEOTIDE SEQUENCE [LARGE SCALE GENOMIC DNA]</scope>
    <source>
        <strain>ATCC 29082 / PCC 7421</strain>
    </source>
</reference>
<dbReference type="EMBL" id="BA000045">
    <property type="protein sequence ID" value="BAC91000.1"/>
    <property type="molecule type" value="Genomic_DNA"/>
</dbReference>
<dbReference type="RefSeq" id="NP_926005.1">
    <property type="nucleotide sequence ID" value="NC_005125.1"/>
</dbReference>
<dbReference type="RefSeq" id="WP_011143052.1">
    <property type="nucleotide sequence ID" value="NC_005125.1"/>
</dbReference>
<dbReference type="SMR" id="Q7NCC0"/>
<dbReference type="FunCoup" id="Q7NCC0">
    <property type="interactions" value="217"/>
</dbReference>
<dbReference type="STRING" id="251221.gene:10760564"/>
<dbReference type="EnsemblBacteria" id="BAC91000">
    <property type="protein sequence ID" value="BAC91000"/>
    <property type="gene ID" value="BAC91000"/>
</dbReference>
<dbReference type="KEGG" id="gvi:gsl3059"/>
<dbReference type="PATRIC" id="fig|251221.4.peg.3089"/>
<dbReference type="eggNOG" id="COG0238">
    <property type="taxonomic scope" value="Bacteria"/>
</dbReference>
<dbReference type="HOGENOM" id="CLU_148710_2_3_3"/>
<dbReference type="InParanoid" id="Q7NCC0"/>
<dbReference type="OrthoDB" id="9812008at2"/>
<dbReference type="PhylomeDB" id="Q7NCC0"/>
<dbReference type="Proteomes" id="UP000000557">
    <property type="component" value="Chromosome"/>
</dbReference>
<dbReference type="GO" id="GO:0022627">
    <property type="term" value="C:cytosolic small ribosomal subunit"/>
    <property type="evidence" value="ECO:0000318"/>
    <property type="project" value="GO_Central"/>
</dbReference>
<dbReference type="GO" id="GO:0070181">
    <property type="term" value="F:small ribosomal subunit rRNA binding"/>
    <property type="evidence" value="ECO:0000318"/>
    <property type="project" value="GO_Central"/>
</dbReference>
<dbReference type="GO" id="GO:0003735">
    <property type="term" value="F:structural constituent of ribosome"/>
    <property type="evidence" value="ECO:0000318"/>
    <property type="project" value="GO_Central"/>
</dbReference>
<dbReference type="GO" id="GO:0006412">
    <property type="term" value="P:translation"/>
    <property type="evidence" value="ECO:0000318"/>
    <property type="project" value="GO_Central"/>
</dbReference>
<dbReference type="FunFam" id="4.10.640.10:FF:000002">
    <property type="entry name" value="30S ribosomal protein S18, chloroplastic"/>
    <property type="match status" value="1"/>
</dbReference>
<dbReference type="Gene3D" id="4.10.640.10">
    <property type="entry name" value="Ribosomal protein S18"/>
    <property type="match status" value="1"/>
</dbReference>
<dbReference type="HAMAP" id="MF_00270">
    <property type="entry name" value="Ribosomal_bS18"/>
    <property type="match status" value="1"/>
</dbReference>
<dbReference type="InterPro" id="IPR001648">
    <property type="entry name" value="Ribosomal_bS18"/>
</dbReference>
<dbReference type="InterPro" id="IPR018275">
    <property type="entry name" value="Ribosomal_bS18_CS"/>
</dbReference>
<dbReference type="InterPro" id="IPR036870">
    <property type="entry name" value="Ribosomal_bS18_sf"/>
</dbReference>
<dbReference type="NCBIfam" id="TIGR00165">
    <property type="entry name" value="S18"/>
    <property type="match status" value="1"/>
</dbReference>
<dbReference type="PANTHER" id="PTHR13479">
    <property type="entry name" value="30S RIBOSOMAL PROTEIN S18"/>
    <property type="match status" value="1"/>
</dbReference>
<dbReference type="PANTHER" id="PTHR13479:SF40">
    <property type="entry name" value="SMALL RIBOSOMAL SUBUNIT PROTEIN BS18M"/>
    <property type="match status" value="1"/>
</dbReference>
<dbReference type="Pfam" id="PF01084">
    <property type="entry name" value="Ribosomal_S18"/>
    <property type="match status" value="1"/>
</dbReference>
<dbReference type="PRINTS" id="PR00974">
    <property type="entry name" value="RIBOSOMALS18"/>
</dbReference>
<dbReference type="SUPFAM" id="SSF46911">
    <property type="entry name" value="Ribosomal protein S18"/>
    <property type="match status" value="1"/>
</dbReference>
<dbReference type="PROSITE" id="PS00057">
    <property type="entry name" value="RIBOSOMAL_S18"/>
    <property type="match status" value="1"/>
</dbReference>
<evidence type="ECO:0000255" key="1">
    <source>
        <dbReference type="HAMAP-Rule" id="MF_00270"/>
    </source>
</evidence>
<evidence type="ECO:0000305" key="2"/>
<keyword id="KW-1185">Reference proteome</keyword>
<keyword id="KW-0687">Ribonucleoprotein</keyword>
<keyword id="KW-0689">Ribosomal protein</keyword>
<keyword id="KW-0694">RNA-binding</keyword>
<keyword id="KW-0699">rRNA-binding</keyword>
<proteinExistence type="inferred from homology"/>
<organism>
    <name type="scientific">Gloeobacter violaceus (strain ATCC 29082 / PCC 7421)</name>
    <dbReference type="NCBI Taxonomy" id="251221"/>
    <lineage>
        <taxon>Bacteria</taxon>
        <taxon>Bacillati</taxon>
        <taxon>Cyanobacteriota</taxon>
        <taxon>Cyanophyceae</taxon>
        <taxon>Gloeobacterales</taxon>
        <taxon>Gloeobacteraceae</taxon>
        <taxon>Gloeobacter</taxon>
    </lineage>
</organism>
<feature type="chain" id="PRO_0000111160" description="Small ribosomal subunit protein bS18">
    <location>
        <begin position="1"/>
        <end position="74"/>
    </location>
</feature>
<sequence>MTSFGYRGKRVSPIPPKDKIDYKEVDLLRKFITERGKILPRRITGLTAKQQRDLTVAIKRARLLALLPFVNQEG</sequence>
<name>RS18_GLOVI</name>
<protein>
    <recommendedName>
        <fullName evidence="1">Small ribosomal subunit protein bS18</fullName>
    </recommendedName>
    <alternativeName>
        <fullName evidence="2">30S ribosomal protein S18</fullName>
    </alternativeName>
</protein>
<comment type="function">
    <text evidence="1">Binds as a heterodimer with protein bS6 to the central domain of the 16S rRNA, where it helps stabilize the platform of the 30S subunit.</text>
</comment>
<comment type="subunit">
    <text evidence="1">Part of the 30S ribosomal subunit. Forms a tight heterodimer with protein bS6.</text>
</comment>
<comment type="similarity">
    <text evidence="1">Belongs to the bacterial ribosomal protein bS18 family.</text>
</comment>
<gene>
    <name evidence="1" type="primary">rpsR</name>
    <name evidence="1" type="synonym">rps18</name>
    <name type="ordered locus">gsl3059</name>
</gene>
<accession>Q7NCC0</accession>